<keyword id="KW-0963">Cytoplasm</keyword>
<keyword id="KW-0240">DNA-directed RNA polymerase</keyword>
<keyword id="KW-0548">Nucleotidyltransferase</keyword>
<keyword id="KW-0804">Transcription</keyword>
<keyword id="KW-0808">Transferase</keyword>
<dbReference type="EC" id="2.7.7.6" evidence="1"/>
<dbReference type="EMBL" id="CP001400">
    <property type="protein sequence ID" value="ACP38654.1"/>
    <property type="molecule type" value="Genomic_DNA"/>
</dbReference>
<dbReference type="RefSeq" id="WP_012711883.1">
    <property type="nucleotide sequence ID" value="NC_012588.1"/>
</dbReference>
<dbReference type="SMR" id="C3MY97"/>
<dbReference type="KEGG" id="sia:M1425_1910"/>
<dbReference type="HOGENOM" id="CLU_058320_4_0_2"/>
<dbReference type="Proteomes" id="UP000001350">
    <property type="component" value="Chromosome"/>
</dbReference>
<dbReference type="GO" id="GO:0005737">
    <property type="term" value="C:cytoplasm"/>
    <property type="evidence" value="ECO:0007669"/>
    <property type="project" value="UniProtKB-SubCell"/>
</dbReference>
<dbReference type="GO" id="GO:0000428">
    <property type="term" value="C:DNA-directed RNA polymerase complex"/>
    <property type="evidence" value="ECO:0007669"/>
    <property type="project" value="UniProtKB-KW"/>
</dbReference>
<dbReference type="GO" id="GO:0003677">
    <property type="term" value="F:DNA binding"/>
    <property type="evidence" value="ECO:0007669"/>
    <property type="project" value="InterPro"/>
</dbReference>
<dbReference type="GO" id="GO:0003899">
    <property type="term" value="F:DNA-directed RNA polymerase activity"/>
    <property type="evidence" value="ECO:0007669"/>
    <property type="project" value="UniProtKB-UniRule"/>
</dbReference>
<dbReference type="GO" id="GO:0006366">
    <property type="term" value="P:transcription by RNA polymerase II"/>
    <property type="evidence" value="ECO:0007669"/>
    <property type="project" value="TreeGrafter"/>
</dbReference>
<dbReference type="GO" id="GO:0006362">
    <property type="term" value="P:transcription elongation by RNA polymerase I"/>
    <property type="evidence" value="ECO:0007669"/>
    <property type="project" value="TreeGrafter"/>
</dbReference>
<dbReference type="GO" id="GO:0042797">
    <property type="term" value="P:tRNA transcription by RNA polymerase III"/>
    <property type="evidence" value="ECO:0007669"/>
    <property type="project" value="TreeGrafter"/>
</dbReference>
<dbReference type="Gene3D" id="3.90.940.20">
    <property type="entry name" value="RPB5-like RNA polymerase subunit"/>
    <property type="match status" value="1"/>
</dbReference>
<dbReference type="HAMAP" id="MF_00025">
    <property type="entry name" value="RNApol_Rpo5_RPB5"/>
    <property type="match status" value="1"/>
</dbReference>
<dbReference type="InterPro" id="IPR014381">
    <property type="entry name" value="Arch_Rpo5/euc_Rpb5"/>
</dbReference>
<dbReference type="InterPro" id="IPR000783">
    <property type="entry name" value="RNA_pol_subH/Rpb5_C"/>
</dbReference>
<dbReference type="InterPro" id="IPR020608">
    <property type="entry name" value="RNA_pol_subH/Rpb5_CS"/>
</dbReference>
<dbReference type="InterPro" id="IPR035913">
    <property type="entry name" value="RPB5-like_sf"/>
</dbReference>
<dbReference type="NCBIfam" id="NF007129">
    <property type="entry name" value="PRK09570.1"/>
    <property type="match status" value="1"/>
</dbReference>
<dbReference type="PANTHER" id="PTHR10535">
    <property type="entry name" value="DNA-DIRECTED RNA POLYMERASES I, II, AND III SUBUNIT RPABC1"/>
    <property type="match status" value="1"/>
</dbReference>
<dbReference type="PANTHER" id="PTHR10535:SF0">
    <property type="entry name" value="DNA-DIRECTED RNA POLYMERASES I, II, AND III SUBUNIT RPABC1"/>
    <property type="match status" value="1"/>
</dbReference>
<dbReference type="Pfam" id="PF01191">
    <property type="entry name" value="RNA_pol_Rpb5_C"/>
    <property type="match status" value="1"/>
</dbReference>
<dbReference type="SUPFAM" id="SSF55287">
    <property type="entry name" value="RPB5-like RNA polymerase subunit"/>
    <property type="match status" value="1"/>
</dbReference>
<dbReference type="PROSITE" id="PS01110">
    <property type="entry name" value="RNA_POL_H_23KD"/>
    <property type="match status" value="1"/>
</dbReference>
<feature type="chain" id="PRO_1000201952" description="DNA-directed RNA polymerase subunit Rpo5">
    <location>
        <begin position="1"/>
        <end position="84"/>
    </location>
</feature>
<evidence type="ECO:0000255" key="1">
    <source>
        <dbReference type="HAMAP-Rule" id="MF_00025"/>
    </source>
</evidence>
<accession>C3MY97</accession>
<protein>
    <recommendedName>
        <fullName evidence="1">DNA-directed RNA polymerase subunit Rpo5</fullName>
        <ecNumber evidence="1">2.7.7.6</ecNumber>
    </recommendedName>
    <alternativeName>
        <fullName evidence="1">DNA-directed RNA polymerase subunit H</fullName>
    </alternativeName>
</protein>
<gene>
    <name evidence="1" type="primary">rpo5</name>
    <name evidence="1" type="synonym">rpoH</name>
    <name type="ordered locus">M1425_1910</name>
</gene>
<organism>
    <name type="scientific">Saccharolobus islandicus (strain M.14.25 / Kamchatka #1)</name>
    <name type="common">Sulfolobus islandicus</name>
    <dbReference type="NCBI Taxonomy" id="427317"/>
    <lineage>
        <taxon>Archaea</taxon>
        <taxon>Thermoproteota</taxon>
        <taxon>Thermoprotei</taxon>
        <taxon>Sulfolobales</taxon>
        <taxon>Sulfolobaceae</taxon>
        <taxon>Saccharolobus</taxon>
    </lineage>
</organism>
<comment type="function">
    <text evidence="1">DNA-dependent RNA polymerase (RNAP) catalyzes the transcription of DNA into RNA using the four ribonucleoside triphosphates as substrates.</text>
</comment>
<comment type="catalytic activity">
    <reaction evidence="1">
        <text>RNA(n) + a ribonucleoside 5'-triphosphate = RNA(n+1) + diphosphate</text>
        <dbReference type="Rhea" id="RHEA:21248"/>
        <dbReference type="Rhea" id="RHEA-COMP:14527"/>
        <dbReference type="Rhea" id="RHEA-COMP:17342"/>
        <dbReference type="ChEBI" id="CHEBI:33019"/>
        <dbReference type="ChEBI" id="CHEBI:61557"/>
        <dbReference type="ChEBI" id="CHEBI:140395"/>
        <dbReference type="EC" id="2.7.7.6"/>
    </reaction>
</comment>
<comment type="subunit">
    <text evidence="1">Part of the RNA polymerase complex.</text>
</comment>
<comment type="subcellular location">
    <subcellularLocation>
        <location evidence="1">Cytoplasm</location>
    </subcellularLocation>
</comment>
<comment type="similarity">
    <text evidence="1">Belongs to the archaeal Rpo5/eukaryotic RPB5 RNA polymerase subunit family.</text>
</comment>
<name>RPO5_SACI4</name>
<reference key="1">
    <citation type="journal article" date="2009" name="Proc. Natl. Acad. Sci. U.S.A.">
        <title>Biogeography of the Sulfolobus islandicus pan-genome.</title>
        <authorList>
            <person name="Reno M.L."/>
            <person name="Held N.L."/>
            <person name="Fields C.J."/>
            <person name="Burke P.V."/>
            <person name="Whitaker R.J."/>
        </authorList>
    </citation>
    <scope>NUCLEOTIDE SEQUENCE [LARGE SCALE GENOMIC DNA]</scope>
    <source>
        <strain>M.14.25 / Kamchatka #1</strain>
    </source>
</reference>
<sequence length="84" mass="9671">MRGSSNRKIDPRIHYLVPKHEVLSIDEAYKILKELGIRPEQLPWIRASDPVARSINAKPGDIIRIIRKSQLYGEVVSYRYVISG</sequence>
<proteinExistence type="inferred from homology"/>